<comment type="function">
    <text evidence="1">Allows the formation of correctly charged Asn-tRNA(Asn) or Gln-tRNA(Gln) through the transamidation of misacylated Asp-tRNA(Asn) or Glu-tRNA(Gln) in organisms which lack either or both of asparaginyl-tRNA or glutaminyl-tRNA synthetases. The reaction takes place in the presence of glutamine and ATP through an activated phospho-Asp-tRNA(Asn) or phospho-Glu-tRNA(Gln).</text>
</comment>
<comment type="catalytic activity">
    <reaction evidence="1">
        <text>L-glutamyl-tRNA(Gln) + L-glutamine + ATP + H2O = L-glutaminyl-tRNA(Gln) + L-glutamate + ADP + phosphate + H(+)</text>
        <dbReference type="Rhea" id="RHEA:17521"/>
        <dbReference type="Rhea" id="RHEA-COMP:9681"/>
        <dbReference type="Rhea" id="RHEA-COMP:9684"/>
        <dbReference type="ChEBI" id="CHEBI:15377"/>
        <dbReference type="ChEBI" id="CHEBI:15378"/>
        <dbReference type="ChEBI" id="CHEBI:29985"/>
        <dbReference type="ChEBI" id="CHEBI:30616"/>
        <dbReference type="ChEBI" id="CHEBI:43474"/>
        <dbReference type="ChEBI" id="CHEBI:58359"/>
        <dbReference type="ChEBI" id="CHEBI:78520"/>
        <dbReference type="ChEBI" id="CHEBI:78521"/>
        <dbReference type="ChEBI" id="CHEBI:456216"/>
    </reaction>
</comment>
<comment type="catalytic activity">
    <reaction evidence="1">
        <text>L-aspartyl-tRNA(Asn) + L-glutamine + ATP + H2O = L-asparaginyl-tRNA(Asn) + L-glutamate + ADP + phosphate + 2 H(+)</text>
        <dbReference type="Rhea" id="RHEA:14513"/>
        <dbReference type="Rhea" id="RHEA-COMP:9674"/>
        <dbReference type="Rhea" id="RHEA-COMP:9677"/>
        <dbReference type="ChEBI" id="CHEBI:15377"/>
        <dbReference type="ChEBI" id="CHEBI:15378"/>
        <dbReference type="ChEBI" id="CHEBI:29985"/>
        <dbReference type="ChEBI" id="CHEBI:30616"/>
        <dbReference type="ChEBI" id="CHEBI:43474"/>
        <dbReference type="ChEBI" id="CHEBI:58359"/>
        <dbReference type="ChEBI" id="CHEBI:78515"/>
        <dbReference type="ChEBI" id="CHEBI:78516"/>
        <dbReference type="ChEBI" id="CHEBI:456216"/>
    </reaction>
</comment>
<comment type="subunit">
    <text evidence="1">Heterotrimer of A, B and C subunits.</text>
</comment>
<comment type="similarity">
    <text evidence="1">Belongs to the GatC family.</text>
</comment>
<accession>Q71YR2</accession>
<dbReference type="EC" id="6.3.5.-" evidence="1"/>
<dbReference type="EMBL" id="AE017262">
    <property type="protein sequence ID" value="AAT04552.1"/>
    <property type="molecule type" value="Genomic_DNA"/>
</dbReference>
<dbReference type="RefSeq" id="WP_003722233.1">
    <property type="nucleotide sequence ID" value="NC_002973.6"/>
</dbReference>
<dbReference type="SMR" id="Q71YR2"/>
<dbReference type="KEGG" id="lmf:LMOf2365_1781"/>
<dbReference type="HOGENOM" id="CLU_105899_6_1_9"/>
<dbReference type="GO" id="GO:0050566">
    <property type="term" value="F:asparaginyl-tRNA synthase (glutamine-hydrolyzing) activity"/>
    <property type="evidence" value="ECO:0007669"/>
    <property type="project" value="RHEA"/>
</dbReference>
<dbReference type="GO" id="GO:0005524">
    <property type="term" value="F:ATP binding"/>
    <property type="evidence" value="ECO:0007669"/>
    <property type="project" value="UniProtKB-KW"/>
</dbReference>
<dbReference type="GO" id="GO:0050567">
    <property type="term" value="F:glutaminyl-tRNA synthase (glutamine-hydrolyzing) activity"/>
    <property type="evidence" value="ECO:0007669"/>
    <property type="project" value="UniProtKB-UniRule"/>
</dbReference>
<dbReference type="GO" id="GO:0070681">
    <property type="term" value="P:glutaminyl-tRNAGln biosynthesis via transamidation"/>
    <property type="evidence" value="ECO:0007669"/>
    <property type="project" value="TreeGrafter"/>
</dbReference>
<dbReference type="GO" id="GO:0006450">
    <property type="term" value="P:regulation of translational fidelity"/>
    <property type="evidence" value="ECO:0007669"/>
    <property type="project" value="InterPro"/>
</dbReference>
<dbReference type="GO" id="GO:0006412">
    <property type="term" value="P:translation"/>
    <property type="evidence" value="ECO:0007669"/>
    <property type="project" value="UniProtKB-UniRule"/>
</dbReference>
<dbReference type="Gene3D" id="1.10.20.60">
    <property type="entry name" value="Glu-tRNAGln amidotransferase C subunit, N-terminal domain"/>
    <property type="match status" value="1"/>
</dbReference>
<dbReference type="HAMAP" id="MF_00122">
    <property type="entry name" value="GatC"/>
    <property type="match status" value="1"/>
</dbReference>
<dbReference type="InterPro" id="IPR036113">
    <property type="entry name" value="Asp/Glu-ADT_sf_sub_c"/>
</dbReference>
<dbReference type="InterPro" id="IPR003837">
    <property type="entry name" value="GatC"/>
</dbReference>
<dbReference type="NCBIfam" id="TIGR00135">
    <property type="entry name" value="gatC"/>
    <property type="match status" value="1"/>
</dbReference>
<dbReference type="PANTHER" id="PTHR15004">
    <property type="entry name" value="GLUTAMYL-TRNA(GLN) AMIDOTRANSFERASE SUBUNIT C, MITOCHONDRIAL"/>
    <property type="match status" value="1"/>
</dbReference>
<dbReference type="PANTHER" id="PTHR15004:SF0">
    <property type="entry name" value="GLUTAMYL-TRNA(GLN) AMIDOTRANSFERASE SUBUNIT C, MITOCHONDRIAL"/>
    <property type="match status" value="1"/>
</dbReference>
<dbReference type="Pfam" id="PF02686">
    <property type="entry name" value="GatC"/>
    <property type="match status" value="1"/>
</dbReference>
<dbReference type="SUPFAM" id="SSF141000">
    <property type="entry name" value="Glu-tRNAGln amidotransferase C subunit"/>
    <property type="match status" value="1"/>
</dbReference>
<keyword id="KW-0067">ATP-binding</keyword>
<keyword id="KW-0436">Ligase</keyword>
<keyword id="KW-0547">Nucleotide-binding</keyword>
<keyword id="KW-0648">Protein biosynthesis</keyword>
<name>GATC_LISMF</name>
<feature type="chain" id="PRO_0000105308" description="Aspartyl/glutamyl-tRNA(Asn/Gln) amidotransferase subunit C">
    <location>
        <begin position="1"/>
        <end position="97"/>
    </location>
</feature>
<protein>
    <recommendedName>
        <fullName evidence="1">Aspartyl/glutamyl-tRNA(Asn/Gln) amidotransferase subunit C</fullName>
        <shortName evidence="1">Asp/Glu-ADT subunit C</shortName>
        <ecNumber evidence="1">6.3.5.-</ecNumber>
    </recommendedName>
</protein>
<gene>
    <name evidence="1" type="primary">gatC</name>
    <name type="ordered locus">LMOf2365_1781</name>
</gene>
<sequence length="97" mass="10627">MSNISKETVEKVANLAKLEVSETEATAFAGQLGKIIELVEQLNTLDTTNVEPTSHAIDVSNVLREDVATKGLDRKEVLKNAPDEQDGMFKVPTIMEQ</sequence>
<proteinExistence type="inferred from homology"/>
<reference key="1">
    <citation type="journal article" date="2004" name="Nucleic Acids Res.">
        <title>Whole genome comparisons of serotype 4b and 1/2a strains of the food-borne pathogen Listeria monocytogenes reveal new insights into the core genome components of this species.</title>
        <authorList>
            <person name="Nelson K.E."/>
            <person name="Fouts D.E."/>
            <person name="Mongodin E.F."/>
            <person name="Ravel J."/>
            <person name="DeBoy R.T."/>
            <person name="Kolonay J.F."/>
            <person name="Rasko D.A."/>
            <person name="Angiuoli S.V."/>
            <person name="Gill S.R."/>
            <person name="Paulsen I.T."/>
            <person name="Peterson J.D."/>
            <person name="White O."/>
            <person name="Nelson W.C."/>
            <person name="Nierman W.C."/>
            <person name="Beanan M.J."/>
            <person name="Brinkac L.M."/>
            <person name="Daugherty S.C."/>
            <person name="Dodson R.J."/>
            <person name="Durkin A.S."/>
            <person name="Madupu R."/>
            <person name="Haft D.H."/>
            <person name="Selengut J."/>
            <person name="Van Aken S.E."/>
            <person name="Khouri H.M."/>
            <person name="Fedorova N."/>
            <person name="Forberger H.A."/>
            <person name="Tran B."/>
            <person name="Kathariou S."/>
            <person name="Wonderling L.D."/>
            <person name="Uhlich G.A."/>
            <person name="Bayles D.O."/>
            <person name="Luchansky J.B."/>
            <person name="Fraser C.M."/>
        </authorList>
    </citation>
    <scope>NUCLEOTIDE SEQUENCE [LARGE SCALE GENOMIC DNA]</scope>
    <source>
        <strain>F2365</strain>
    </source>
</reference>
<evidence type="ECO:0000255" key="1">
    <source>
        <dbReference type="HAMAP-Rule" id="MF_00122"/>
    </source>
</evidence>
<organism>
    <name type="scientific">Listeria monocytogenes serotype 4b (strain F2365)</name>
    <dbReference type="NCBI Taxonomy" id="265669"/>
    <lineage>
        <taxon>Bacteria</taxon>
        <taxon>Bacillati</taxon>
        <taxon>Bacillota</taxon>
        <taxon>Bacilli</taxon>
        <taxon>Bacillales</taxon>
        <taxon>Listeriaceae</taxon>
        <taxon>Listeria</taxon>
    </lineage>
</organism>